<accession>B2SPN6</accession>
<dbReference type="EC" id="3.13.2.1" evidence="1"/>
<dbReference type="EMBL" id="CP000967">
    <property type="protein sequence ID" value="ACD57723.1"/>
    <property type="molecule type" value="Genomic_DNA"/>
</dbReference>
<dbReference type="RefSeq" id="WP_011260204.1">
    <property type="nucleotide sequence ID" value="NC_010717.2"/>
</dbReference>
<dbReference type="SMR" id="B2SPN6"/>
<dbReference type="KEGG" id="xop:PXO_04338"/>
<dbReference type="eggNOG" id="COG0499">
    <property type="taxonomic scope" value="Bacteria"/>
</dbReference>
<dbReference type="HOGENOM" id="CLU_025194_2_1_6"/>
<dbReference type="UniPathway" id="UPA00314">
    <property type="reaction ID" value="UER00076"/>
</dbReference>
<dbReference type="Proteomes" id="UP000001740">
    <property type="component" value="Chromosome"/>
</dbReference>
<dbReference type="GO" id="GO:0005829">
    <property type="term" value="C:cytosol"/>
    <property type="evidence" value="ECO:0007669"/>
    <property type="project" value="TreeGrafter"/>
</dbReference>
<dbReference type="GO" id="GO:0004013">
    <property type="term" value="F:adenosylhomocysteinase activity"/>
    <property type="evidence" value="ECO:0007669"/>
    <property type="project" value="UniProtKB-UniRule"/>
</dbReference>
<dbReference type="GO" id="GO:0071269">
    <property type="term" value="P:L-homocysteine biosynthetic process"/>
    <property type="evidence" value="ECO:0007669"/>
    <property type="project" value="UniProtKB-UniRule"/>
</dbReference>
<dbReference type="GO" id="GO:0006730">
    <property type="term" value="P:one-carbon metabolic process"/>
    <property type="evidence" value="ECO:0007669"/>
    <property type="project" value="UniProtKB-KW"/>
</dbReference>
<dbReference type="GO" id="GO:0033353">
    <property type="term" value="P:S-adenosylmethionine cycle"/>
    <property type="evidence" value="ECO:0007669"/>
    <property type="project" value="TreeGrafter"/>
</dbReference>
<dbReference type="CDD" id="cd00401">
    <property type="entry name" value="SAHH"/>
    <property type="match status" value="1"/>
</dbReference>
<dbReference type="FunFam" id="3.40.50.720:FF:000004">
    <property type="entry name" value="Adenosylhomocysteinase"/>
    <property type="match status" value="1"/>
</dbReference>
<dbReference type="Gene3D" id="3.40.50.1480">
    <property type="entry name" value="Adenosylhomocysteinase-like"/>
    <property type="match status" value="1"/>
</dbReference>
<dbReference type="Gene3D" id="3.40.50.720">
    <property type="entry name" value="NAD(P)-binding Rossmann-like Domain"/>
    <property type="match status" value="1"/>
</dbReference>
<dbReference type="HAMAP" id="MF_00563">
    <property type="entry name" value="AdoHcyase"/>
    <property type="match status" value="1"/>
</dbReference>
<dbReference type="InterPro" id="IPR042172">
    <property type="entry name" value="Adenosylhomocyst_ase-like_sf"/>
</dbReference>
<dbReference type="InterPro" id="IPR000043">
    <property type="entry name" value="Adenosylhomocysteinase-like"/>
</dbReference>
<dbReference type="InterPro" id="IPR015878">
    <property type="entry name" value="Ado_hCys_hydrolase_NAD-bd"/>
</dbReference>
<dbReference type="InterPro" id="IPR036291">
    <property type="entry name" value="NAD(P)-bd_dom_sf"/>
</dbReference>
<dbReference type="InterPro" id="IPR020082">
    <property type="entry name" value="S-Ado-L-homoCys_hydrolase_CS"/>
</dbReference>
<dbReference type="NCBIfam" id="TIGR00936">
    <property type="entry name" value="ahcY"/>
    <property type="match status" value="1"/>
</dbReference>
<dbReference type="NCBIfam" id="NF004005">
    <property type="entry name" value="PRK05476.2-3"/>
    <property type="match status" value="1"/>
</dbReference>
<dbReference type="PANTHER" id="PTHR23420">
    <property type="entry name" value="ADENOSYLHOMOCYSTEINASE"/>
    <property type="match status" value="1"/>
</dbReference>
<dbReference type="PANTHER" id="PTHR23420:SF0">
    <property type="entry name" value="ADENOSYLHOMOCYSTEINASE"/>
    <property type="match status" value="1"/>
</dbReference>
<dbReference type="Pfam" id="PF05221">
    <property type="entry name" value="AdoHcyase"/>
    <property type="match status" value="1"/>
</dbReference>
<dbReference type="Pfam" id="PF00670">
    <property type="entry name" value="AdoHcyase_NAD"/>
    <property type="match status" value="1"/>
</dbReference>
<dbReference type="PIRSF" id="PIRSF001109">
    <property type="entry name" value="Ad_hcy_hydrolase"/>
    <property type="match status" value="1"/>
</dbReference>
<dbReference type="SMART" id="SM00996">
    <property type="entry name" value="AdoHcyase"/>
    <property type="match status" value="1"/>
</dbReference>
<dbReference type="SMART" id="SM00997">
    <property type="entry name" value="AdoHcyase_NAD"/>
    <property type="match status" value="1"/>
</dbReference>
<dbReference type="SUPFAM" id="SSF52283">
    <property type="entry name" value="Formate/glycerate dehydrogenase catalytic domain-like"/>
    <property type="match status" value="1"/>
</dbReference>
<dbReference type="SUPFAM" id="SSF51735">
    <property type="entry name" value="NAD(P)-binding Rossmann-fold domains"/>
    <property type="match status" value="1"/>
</dbReference>
<dbReference type="PROSITE" id="PS00738">
    <property type="entry name" value="ADOHCYASE_1"/>
    <property type="match status" value="1"/>
</dbReference>
<dbReference type="PROSITE" id="PS00739">
    <property type="entry name" value="ADOHCYASE_2"/>
    <property type="match status" value="1"/>
</dbReference>
<reference key="1">
    <citation type="journal article" date="2008" name="BMC Genomics">
        <title>Genome sequence and rapid evolution of the rice pathogen Xanthomonas oryzae pv. oryzae PXO99A.</title>
        <authorList>
            <person name="Salzberg S.L."/>
            <person name="Sommer D.D."/>
            <person name="Schatz M.C."/>
            <person name="Phillippy A.M."/>
            <person name="Rabinowicz P.D."/>
            <person name="Tsuge S."/>
            <person name="Furutani A."/>
            <person name="Ochiai H."/>
            <person name="Delcher A.L."/>
            <person name="Kelley D."/>
            <person name="Madupu R."/>
            <person name="Puiu D."/>
            <person name="Radune D."/>
            <person name="Shumway M."/>
            <person name="Trapnell C."/>
            <person name="Aparna G."/>
            <person name="Jha G."/>
            <person name="Pandey A."/>
            <person name="Patil P.B."/>
            <person name="Ishihara H."/>
            <person name="Meyer D.F."/>
            <person name="Szurek B."/>
            <person name="Verdier V."/>
            <person name="Koebnik R."/>
            <person name="Dow J.M."/>
            <person name="Ryan R.P."/>
            <person name="Hirata H."/>
            <person name="Tsuyumu S."/>
            <person name="Won Lee S."/>
            <person name="Seo Y.-S."/>
            <person name="Sriariyanum M."/>
            <person name="Ronald P.C."/>
            <person name="Sonti R.V."/>
            <person name="Van Sluys M.-A."/>
            <person name="Leach J.E."/>
            <person name="White F.F."/>
            <person name="Bogdanove A.J."/>
        </authorList>
    </citation>
    <scope>NUCLEOTIDE SEQUENCE [LARGE SCALE GENOMIC DNA]</scope>
    <source>
        <strain>PXO99A</strain>
    </source>
</reference>
<keyword id="KW-0963">Cytoplasm</keyword>
<keyword id="KW-0378">Hydrolase</keyword>
<keyword id="KW-0520">NAD</keyword>
<keyword id="KW-0554">One-carbon metabolism</keyword>
<sequence length="480" mass="52771">MNAVTKITPHADYKIADISLADWGRKELDIAEHEMPGLMSIRRKHAQTTPLKDVRITGSLHMTIQTAVLIETLKDIGANVRWASCNIFSTQDHAAAAIAATGTPVFAWKGETLEEYWDCTLDALTFTLPDGTLTGPELVVDDGGDVTLLIHKGYELENGSTWVDEPASSHEESVIKALLKRVAVERPGYWARVVKDWKGVSEETTTGVHRLYQIAEAGKLLIPAINVNDSVTKSKFDNLYGCRESLADGLKRAMDVMLAGKVAVVCGYGDVGKGSAASLRAYGARVVVTEIDPICALQASMEGFEVNTIESTLGRADIYVTTTGNKDIITVEHLQAMKDQAIVCNIGHFDNEIQVDALKALKDVQKINIKPQVDKYVFPNGNAIFLLADGRLVNLGCATGHPSFVMSNSFANQTLAQIDLWEKRDTYEKKVYILPKHLDEEVARLHLEKIGVKLTTLTKDQADYLGVDVAGPYKPDHYRY</sequence>
<feature type="chain" id="PRO_1000129303" description="Adenosylhomocysteinase">
    <location>
        <begin position="1"/>
        <end position="480"/>
    </location>
</feature>
<feature type="binding site" evidence="1">
    <location>
        <position position="63"/>
    </location>
    <ligand>
        <name>substrate</name>
    </ligand>
</feature>
<feature type="binding site" evidence="1">
    <location>
        <position position="142"/>
    </location>
    <ligand>
        <name>substrate</name>
    </ligand>
</feature>
<feature type="binding site" evidence="1">
    <location>
        <position position="203"/>
    </location>
    <ligand>
        <name>substrate</name>
    </ligand>
</feature>
<feature type="binding site" evidence="1">
    <location>
        <begin position="204"/>
        <end position="206"/>
    </location>
    <ligand>
        <name>NAD(+)</name>
        <dbReference type="ChEBI" id="CHEBI:57540"/>
    </ligand>
</feature>
<feature type="binding site" evidence="1">
    <location>
        <position position="233"/>
    </location>
    <ligand>
        <name>substrate</name>
    </ligand>
</feature>
<feature type="binding site" evidence="1">
    <location>
        <position position="237"/>
    </location>
    <ligand>
        <name>substrate</name>
    </ligand>
</feature>
<feature type="binding site" evidence="1">
    <location>
        <position position="238"/>
    </location>
    <ligand>
        <name>NAD(+)</name>
        <dbReference type="ChEBI" id="CHEBI:57540"/>
    </ligand>
</feature>
<feature type="binding site" evidence="1">
    <location>
        <begin position="267"/>
        <end position="272"/>
    </location>
    <ligand>
        <name>NAD(+)</name>
        <dbReference type="ChEBI" id="CHEBI:57540"/>
    </ligand>
</feature>
<feature type="binding site" evidence="1">
    <location>
        <position position="290"/>
    </location>
    <ligand>
        <name>NAD(+)</name>
        <dbReference type="ChEBI" id="CHEBI:57540"/>
    </ligand>
</feature>
<feature type="binding site" evidence="1">
    <location>
        <position position="325"/>
    </location>
    <ligand>
        <name>NAD(+)</name>
        <dbReference type="ChEBI" id="CHEBI:57540"/>
    </ligand>
</feature>
<feature type="binding site" evidence="1">
    <location>
        <begin position="346"/>
        <end position="348"/>
    </location>
    <ligand>
        <name>NAD(+)</name>
        <dbReference type="ChEBI" id="CHEBI:57540"/>
    </ligand>
</feature>
<feature type="binding site" evidence="1">
    <location>
        <position position="394"/>
    </location>
    <ligand>
        <name>NAD(+)</name>
        <dbReference type="ChEBI" id="CHEBI:57540"/>
    </ligand>
</feature>
<evidence type="ECO:0000255" key="1">
    <source>
        <dbReference type="HAMAP-Rule" id="MF_00563"/>
    </source>
</evidence>
<gene>
    <name evidence="1" type="primary">ahcY</name>
    <name type="ordered locus">PXO_04338</name>
</gene>
<proteinExistence type="inferred from homology"/>
<name>SAHH_XANOP</name>
<comment type="function">
    <text evidence="1">May play a key role in the regulation of the intracellular concentration of adenosylhomocysteine.</text>
</comment>
<comment type="catalytic activity">
    <reaction evidence="1">
        <text>S-adenosyl-L-homocysteine + H2O = L-homocysteine + adenosine</text>
        <dbReference type="Rhea" id="RHEA:21708"/>
        <dbReference type="ChEBI" id="CHEBI:15377"/>
        <dbReference type="ChEBI" id="CHEBI:16335"/>
        <dbReference type="ChEBI" id="CHEBI:57856"/>
        <dbReference type="ChEBI" id="CHEBI:58199"/>
        <dbReference type="EC" id="3.13.2.1"/>
    </reaction>
</comment>
<comment type="cofactor">
    <cofactor evidence="1">
        <name>NAD(+)</name>
        <dbReference type="ChEBI" id="CHEBI:57540"/>
    </cofactor>
    <text evidence="1">Binds 1 NAD(+) per subunit.</text>
</comment>
<comment type="pathway">
    <text evidence="1">Amino-acid biosynthesis; L-homocysteine biosynthesis; L-homocysteine from S-adenosyl-L-homocysteine: step 1/1.</text>
</comment>
<comment type="subcellular location">
    <subcellularLocation>
        <location evidence="1">Cytoplasm</location>
    </subcellularLocation>
</comment>
<comment type="similarity">
    <text evidence="1">Belongs to the adenosylhomocysteinase family.</text>
</comment>
<organism>
    <name type="scientific">Xanthomonas oryzae pv. oryzae (strain PXO99A)</name>
    <dbReference type="NCBI Taxonomy" id="360094"/>
    <lineage>
        <taxon>Bacteria</taxon>
        <taxon>Pseudomonadati</taxon>
        <taxon>Pseudomonadota</taxon>
        <taxon>Gammaproteobacteria</taxon>
        <taxon>Lysobacterales</taxon>
        <taxon>Lysobacteraceae</taxon>
        <taxon>Xanthomonas</taxon>
    </lineage>
</organism>
<protein>
    <recommendedName>
        <fullName evidence="1">Adenosylhomocysteinase</fullName>
        <ecNumber evidence="1">3.13.2.1</ecNumber>
    </recommendedName>
    <alternativeName>
        <fullName evidence="1">S-adenosyl-L-homocysteine hydrolase</fullName>
        <shortName evidence="1">AdoHcyase</shortName>
    </alternativeName>
</protein>